<gene>
    <name type="primary">HSP90AB1</name>
    <name evidence="3" type="synonym">HSPC3</name>
    <name type="synonym">HSPCB</name>
</gene>
<comment type="function">
    <text evidence="3">Molecular chaperone that promotes the maturation, structural maintenance and proper regulation of specific target proteins involved for instance in cell cycle control and signal transduction. Undergoes a functional cycle linked to its ATPase activity. This cycle probably induces conformational changes in the client proteins, thereby causing their activation. Interacts dynamically with various co-chaperones that modulate its substrate recognition, ATPase cycle and chaperone function. Engages with a range of client protein classes via its interaction with various co-chaperone proteins or complexes, that act as adapters, simultaneously able to interact with the specific client and the central chaperone itself. Recruitment of ATP and co-chaperone followed by client protein forms a functional chaperone. After the completion of the chaperoning process, properly folded client protein and co-chaperone leave HSP90 in an ADP-bound partially open conformation and finally, ADP is released from HSP90 which acquires an open conformation for the next cycle.</text>
</comment>
<comment type="activity regulation">
    <text evidence="3">In the resting state, through the dimerization of its C-terminal domain, HSP90 forms a homodimer which is defined as the open conformation. Upon ATP-binding, the N-terminal domain undergoes significant conformational changes and comes in contact to form an active closed conformation. After HSP90 finishes its chaperoning tasks of assisting the proper folding, stabilization and activation of client proteins under the active state, ATP molecule is hydrolyzed to ADP which then dissociates from HSP90 and directs the protein back to the resting state.</text>
</comment>
<comment type="subunit">
    <text evidence="3">Monomer. Homodimer.</text>
</comment>
<comment type="subcellular location">
    <subcellularLocation>
        <location evidence="3">Cytoplasm</location>
    </subcellularLocation>
    <subcellularLocation>
        <location evidence="3">Melanosome</location>
    </subcellularLocation>
    <subcellularLocation>
        <location evidence="4">Dynein axonemal particle</location>
    </subcellularLocation>
</comment>
<comment type="domain">
    <text evidence="2">The TPR repeat-binding motif mediates interaction with TPR repeat-containing proteins.</text>
</comment>
<comment type="miscellaneous">
    <text>In contrast to other HSP90 heat shock proteins, this one is not induced by heat shock or mitogenic stimuli but is strictly constitutive.</text>
</comment>
<comment type="similarity">
    <text evidence="6">Belongs to the heat shock protein 90 family.</text>
</comment>
<proteinExistence type="evidence at transcript level"/>
<feature type="chain" id="PRO_0000062923" description="Heat shock cognate protein HSP 90-beta">
    <location>
        <begin position="1"/>
        <end position="725"/>
    </location>
</feature>
<feature type="region of interest" description="Disordered" evidence="5">
    <location>
        <begin position="220"/>
        <end position="271"/>
    </location>
</feature>
<feature type="region of interest" description="Disordered" evidence="5">
    <location>
        <begin position="697"/>
        <end position="725"/>
    </location>
</feature>
<feature type="short sequence motif" description="TPR repeat-binding">
    <location>
        <begin position="721"/>
        <end position="725"/>
    </location>
</feature>
<feature type="compositionally biased region" description="Acidic residues" evidence="5">
    <location>
        <begin position="225"/>
        <end position="243"/>
    </location>
</feature>
<feature type="compositionally biased region" description="Acidic residues" evidence="5">
    <location>
        <begin position="253"/>
        <end position="262"/>
    </location>
</feature>
<feature type="binding site" evidence="1">
    <location>
        <position position="46"/>
    </location>
    <ligand>
        <name>ATP</name>
        <dbReference type="ChEBI" id="CHEBI:30616"/>
    </ligand>
</feature>
<feature type="binding site" evidence="1">
    <location>
        <position position="88"/>
    </location>
    <ligand>
        <name>ATP</name>
        <dbReference type="ChEBI" id="CHEBI:30616"/>
    </ligand>
</feature>
<feature type="binding site" evidence="1">
    <location>
        <position position="107"/>
    </location>
    <ligand>
        <name>ATP</name>
        <dbReference type="ChEBI" id="CHEBI:30616"/>
    </ligand>
</feature>
<feature type="binding site" evidence="1">
    <location>
        <position position="133"/>
    </location>
    <ligand>
        <name>ATP</name>
        <dbReference type="ChEBI" id="CHEBI:30616"/>
    </ligand>
</feature>
<feature type="binding site" evidence="1">
    <location>
        <position position="393"/>
    </location>
    <ligand>
        <name>ATP</name>
        <dbReference type="ChEBI" id="CHEBI:30616"/>
    </ligand>
</feature>
<feature type="modified residue" description="Phosphoserine" evidence="1">
    <location>
        <position position="226"/>
    </location>
</feature>
<feature type="modified residue" description="Phosphoserine" evidence="1">
    <location>
        <position position="255"/>
    </location>
</feature>
<organism>
    <name type="scientific">Gallus gallus</name>
    <name type="common">Chicken</name>
    <dbReference type="NCBI Taxonomy" id="9031"/>
    <lineage>
        <taxon>Eukaryota</taxon>
        <taxon>Metazoa</taxon>
        <taxon>Chordata</taxon>
        <taxon>Craniata</taxon>
        <taxon>Vertebrata</taxon>
        <taxon>Euteleostomi</taxon>
        <taxon>Archelosauria</taxon>
        <taxon>Archosauria</taxon>
        <taxon>Dinosauria</taxon>
        <taxon>Saurischia</taxon>
        <taxon>Theropoda</taxon>
        <taxon>Coelurosauria</taxon>
        <taxon>Aves</taxon>
        <taxon>Neognathae</taxon>
        <taxon>Galloanserae</taxon>
        <taxon>Galliformes</taxon>
        <taxon>Phasianidae</taxon>
        <taxon>Phasianinae</taxon>
        <taxon>Gallus</taxon>
    </lineage>
</organism>
<sequence length="725" mass="83427">MPEQVQHGEDEVETFAFQAEIAQLMSLIINTFYSNKEIFLRELISNASDALDKIRYESLTDPSKLDTGKDLKIDIVPNPRDPTLTLLDTGIGMTKADLVNNLGTIAKSGTKAFMEALQAGADISMIGQFGVGFYSAYLVAEKVVVITKHNDDEQYAWESSAGGSFTVRTDHGEPIGRGTKVILYLKEDQTEYLEERRVKEVVKKHSQFIGYPITLYVEKEREKEVSDDEAEEEKVEKEEEESKDEEKPKIEDVGSDEEEEEGEKSKKKKTKKIKEKYIDQEELNKTKPIWTRNPDDITQEEYGEFYKSLTNDWEDHLAVKHFSVEGQLEFRALLFIPRRAPFDLFENKKKKNNIKLYVRRVFIMDSCDELIPEYLNFIRGVVDSEDLPLNISREMLQQSKILKVIRKNIVKKCLELFTELAEDKENYKKFYEAFSKNLKLGIHEDSTNRKRLSELLRYHTSQSGDEMTSLSEYVSRMKESQKSIYYITGESKEQVANSAFVERVRKRGFEVVYMTEPIDEYCVQQLKEFDGKTLVSVTKEGLELPEDEEEKKNMEESKAKFETLCKLMKEILDKKVEKVTISNRLVSSPCCIVTSTYGWTANMERIMKAQALRDNSTMGYMMAKKHLEINPDHPIVETLRQKADANKNDKAVKDLVVLLFETALLSSGFSLEDPQTHSNRIYRMIKLGLGIDEDEVIAEESSIAPPDEIPPLEGDEDTSRMEEVD</sequence>
<dbReference type="EMBL" id="X70101">
    <property type="protein sequence ID" value="CAA49704.1"/>
    <property type="molecule type" value="mRNA"/>
</dbReference>
<dbReference type="PIR" id="JC1468">
    <property type="entry name" value="JC1468"/>
</dbReference>
<dbReference type="RefSeq" id="NP_996842.1">
    <property type="nucleotide sequence ID" value="NM_206959.1"/>
</dbReference>
<dbReference type="SMR" id="Q04619"/>
<dbReference type="BioGRID" id="676448">
    <property type="interactions" value="6"/>
</dbReference>
<dbReference type="FunCoup" id="Q04619">
    <property type="interactions" value="2798"/>
</dbReference>
<dbReference type="STRING" id="9031.ENSGALP00000016523"/>
<dbReference type="PaxDb" id="9031-ENSGALP00000016523"/>
<dbReference type="ABCD" id="Q04619">
    <property type="antibodies" value="1 sequenced antibody"/>
</dbReference>
<dbReference type="KEGG" id="gga:396188"/>
<dbReference type="VEuPathDB" id="HostDB:geneid_396188"/>
<dbReference type="eggNOG" id="KOG0019">
    <property type="taxonomic scope" value="Eukaryota"/>
</dbReference>
<dbReference type="InParanoid" id="Q04619"/>
<dbReference type="OrthoDB" id="5426351at2759"/>
<dbReference type="PhylomeDB" id="Q04619"/>
<dbReference type="PRO" id="PR:Q04619"/>
<dbReference type="Proteomes" id="UP000000539">
    <property type="component" value="Unassembled WGS sequence"/>
</dbReference>
<dbReference type="GO" id="GO:0034751">
    <property type="term" value="C:aryl hydrocarbon receptor complex"/>
    <property type="evidence" value="ECO:0000250"/>
    <property type="project" value="UniProtKB"/>
</dbReference>
<dbReference type="GO" id="GO:0005737">
    <property type="term" value="C:cytoplasm"/>
    <property type="evidence" value="ECO:0000250"/>
    <property type="project" value="UniProtKB"/>
</dbReference>
<dbReference type="GO" id="GO:0005829">
    <property type="term" value="C:cytosol"/>
    <property type="evidence" value="ECO:0000318"/>
    <property type="project" value="GO_Central"/>
</dbReference>
<dbReference type="GO" id="GO:0120293">
    <property type="term" value="C:dynein axonemal particle"/>
    <property type="evidence" value="ECO:0000250"/>
    <property type="project" value="UniProtKB"/>
</dbReference>
<dbReference type="GO" id="GO:0005576">
    <property type="term" value="C:extracellular region"/>
    <property type="evidence" value="ECO:0000250"/>
    <property type="project" value="UniProtKB"/>
</dbReference>
<dbReference type="GO" id="GO:0042470">
    <property type="term" value="C:melanosome"/>
    <property type="evidence" value="ECO:0007669"/>
    <property type="project" value="UniProtKB-SubCell"/>
</dbReference>
<dbReference type="GO" id="GO:0005634">
    <property type="term" value="C:nucleus"/>
    <property type="evidence" value="ECO:0000250"/>
    <property type="project" value="UniProtKB"/>
</dbReference>
<dbReference type="GO" id="GO:0048471">
    <property type="term" value="C:perinuclear region of cytoplasm"/>
    <property type="evidence" value="ECO:0000318"/>
    <property type="project" value="GO_Central"/>
</dbReference>
<dbReference type="GO" id="GO:0005886">
    <property type="term" value="C:plasma membrane"/>
    <property type="evidence" value="ECO:0000318"/>
    <property type="project" value="GO_Central"/>
</dbReference>
<dbReference type="GO" id="GO:0032991">
    <property type="term" value="C:protein-containing complex"/>
    <property type="evidence" value="ECO:0000318"/>
    <property type="project" value="GO_Central"/>
</dbReference>
<dbReference type="GO" id="GO:0005524">
    <property type="term" value="F:ATP binding"/>
    <property type="evidence" value="ECO:0000318"/>
    <property type="project" value="GO_Central"/>
</dbReference>
<dbReference type="GO" id="GO:0016887">
    <property type="term" value="F:ATP hydrolysis activity"/>
    <property type="evidence" value="ECO:0000318"/>
    <property type="project" value="GO_Central"/>
</dbReference>
<dbReference type="GO" id="GO:0140662">
    <property type="term" value="F:ATP-dependent protein folding chaperone"/>
    <property type="evidence" value="ECO:0007669"/>
    <property type="project" value="InterPro"/>
</dbReference>
<dbReference type="GO" id="GO:0046983">
    <property type="term" value="F:protein dimerization activity"/>
    <property type="evidence" value="ECO:0000250"/>
    <property type="project" value="UniProtKB"/>
</dbReference>
<dbReference type="GO" id="GO:0141069">
    <property type="term" value="F:receptor ligand inhibitor activity"/>
    <property type="evidence" value="ECO:0000250"/>
    <property type="project" value="UniProtKB"/>
</dbReference>
<dbReference type="GO" id="GO:0051082">
    <property type="term" value="F:unfolded protein binding"/>
    <property type="evidence" value="ECO:0000318"/>
    <property type="project" value="GO_Central"/>
</dbReference>
<dbReference type="GO" id="GO:0034605">
    <property type="term" value="P:cellular response to heat"/>
    <property type="evidence" value="ECO:0000318"/>
    <property type="project" value="GO_Central"/>
</dbReference>
<dbReference type="GO" id="GO:0032435">
    <property type="term" value="P:negative regulation of proteasomal ubiquitin-dependent protein catabolic process"/>
    <property type="evidence" value="ECO:0000250"/>
    <property type="project" value="UniProtKB"/>
</dbReference>
<dbReference type="GO" id="GO:0030511">
    <property type="term" value="P:positive regulation of transforming growth factor beta receptor signaling pathway"/>
    <property type="evidence" value="ECO:0000250"/>
    <property type="project" value="UniProtKB"/>
</dbReference>
<dbReference type="GO" id="GO:0006457">
    <property type="term" value="P:protein folding"/>
    <property type="evidence" value="ECO:0000318"/>
    <property type="project" value="GO_Central"/>
</dbReference>
<dbReference type="GO" id="GO:0050821">
    <property type="term" value="P:protein stabilization"/>
    <property type="evidence" value="ECO:0000318"/>
    <property type="project" value="GO_Central"/>
</dbReference>
<dbReference type="GO" id="GO:0051726">
    <property type="term" value="P:regulation of cell cycle"/>
    <property type="evidence" value="ECO:0000250"/>
    <property type="project" value="UniProtKB"/>
</dbReference>
<dbReference type="CDD" id="cd16927">
    <property type="entry name" value="HATPase_Hsp90-like"/>
    <property type="match status" value="1"/>
</dbReference>
<dbReference type="FunFam" id="1.20.120.790:FF:000001">
    <property type="entry name" value="Heat shock protein 90 alpha"/>
    <property type="match status" value="1"/>
</dbReference>
<dbReference type="FunFam" id="3.30.230.80:FF:000001">
    <property type="entry name" value="Heat shock protein 90 alpha"/>
    <property type="match status" value="1"/>
</dbReference>
<dbReference type="FunFam" id="3.40.50.11260:FF:000001">
    <property type="entry name" value="Heat shock protein 90 alpha"/>
    <property type="match status" value="1"/>
</dbReference>
<dbReference type="FunFam" id="3.30.565.10:FF:000204">
    <property type="entry name" value="Heat shock protein HSP 90-beta"/>
    <property type="match status" value="1"/>
</dbReference>
<dbReference type="Gene3D" id="3.30.230.80">
    <property type="match status" value="1"/>
</dbReference>
<dbReference type="Gene3D" id="3.40.50.11260">
    <property type="match status" value="1"/>
</dbReference>
<dbReference type="Gene3D" id="1.20.120.790">
    <property type="entry name" value="Heat shock protein 90, C-terminal domain"/>
    <property type="match status" value="1"/>
</dbReference>
<dbReference type="Gene3D" id="3.30.565.10">
    <property type="entry name" value="Histidine kinase-like ATPase, C-terminal domain"/>
    <property type="match status" value="1"/>
</dbReference>
<dbReference type="HAMAP" id="MF_00505">
    <property type="entry name" value="HSP90"/>
    <property type="match status" value="1"/>
</dbReference>
<dbReference type="InterPro" id="IPR036890">
    <property type="entry name" value="HATPase_C_sf"/>
</dbReference>
<dbReference type="InterPro" id="IPR019805">
    <property type="entry name" value="Heat_shock_protein_90_CS"/>
</dbReference>
<dbReference type="InterPro" id="IPR037196">
    <property type="entry name" value="HSP90_C"/>
</dbReference>
<dbReference type="InterPro" id="IPR001404">
    <property type="entry name" value="Hsp90_fam"/>
</dbReference>
<dbReference type="InterPro" id="IPR020575">
    <property type="entry name" value="Hsp90_N"/>
</dbReference>
<dbReference type="InterPro" id="IPR020568">
    <property type="entry name" value="Ribosomal_Su5_D2-typ_SF"/>
</dbReference>
<dbReference type="NCBIfam" id="NF003555">
    <property type="entry name" value="PRK05218.1"/>
    <property type="match status" value="1"/>
</dbReference>
<dbReference type="PANTHER" id="PTHR11528">
    <property type="entry name" value="HEAT SHOCK PROTEIN 90 FAMILY MEMBER"/>
    <property type="match status" value="1"/>
</dbReference>
<dbReference type="Pfam" id="PF13589">
    <property type="entry name" value="HATPase_c_3"/>
    <property type="match status" value="1"/>
</dbReference>
<dbReference type="Pfam" id="PF00183">
    <property type="entry name" value="HSP90"/>
    <property type="match status" value="1"/>
</dbReference>
<dbReference type="PIRSF" id="PIRSF002583">
    <property type="entry name" value="Hsp90"/>
    <property type="match status" value="1"/>
</dbReference>
<dbReference type="PRINTS" id="PR00775">
    <property type="entry name" value="HEATSHOCK90"/>
</dbReference>
<dbReference type="SMART" id="SM00387">
    <property type="entry name" value="HATPase_c"/>
    <property type="match status" value="1"/>
</dbReference>
<dbReference type="SUPFAM" id="SSF55874">
    <property type="entry name" value="ATPase domain of HSP90 chaperone/DNA topoisomerase II/histidine kinase"/>
    <property type="match status" value="1"/>
</dbReference>
<dbReference type="SUPFAM" id="SSF110942">
    <property type="entry name" value="HSP90 C-terminal domain"/>
    <property type="match status" value="1"/>
</dbReference>
<dbReference type="SUPFAM" id="SSF54211">
    <property type="entry name" value="Ribosomal protein S5 domain 2-like"/>
    <property type="match status" value="1"/>
</dbReference>
<dbReference type="PROSITE" id="PS00298">
    <property type="entry name" value="HSP90"/>
    <property type="match status" value="1"/>
</dbReference>
<reference key="1">
    <citation type="journal article" date="1993" name="Biochem. Biophys. Res. Commun.">
        <title>Cloning of chicken hsp90 beta: the only vertebrate hsp90 insensitive to heat shock.</title>
        <authorList>
            <person name="Meng X."/>
            <person name="Jerome V."/>
            <person name="Devin J."/>
            <person name="Baulieu E.-E."/>
            <person name="Catelli M.-G."/>
        </authorList>
    </citation>
    <scope>NUCLEOTIDE SEQUENCE [MRNA]</scope>
    <source>
        <tissue>Embryo</tissue>
    </source>
</reference>
<accession>Q04619</accession>
<protein>
    <recommendedName>
        <fullName>Heat shock cognate protein HSP 90-beta</fullName>
    </recommendedName>
</protein>
<keyword id="KW-0067">ATP-binding</keyword>
<keyword id="KW-0143">Chaperone</keyword>
<keyword id="KW-0963">Cytoplasm</keyword>
<keyword id="KW-0547">Nucleotide-binding</keyword>
<keyword id="KW-0597">Phosphoprotein</keyword>
<keyword id="KW-1185">Reference proteome</keyword>
<keyword id="KW-0346">Stress response</keyword>
<name>HS90B_CHICK</name>
<evidence type="ECO:0000250" key="1"/>
<evidence type="ECO:0000250" key="2">
    <source>
        <dbReference type="UniProtKB" id="P07900"/>
    </source>
</evidence>
<evidence type="ECO:0000250" key="3">
    <source>
        <dbReference type="UniProtKB" id="P08238"/>
    </source>
</evidence>
<evidence type="ECO:0000250" key="4">
    <source>
        <dbReference type="UniProtKB" id="Q6AZV1"/>
    </source>
</evidence>
<evidence type="ECO:0000256" key="5">
    <source>
        <dbReference type="SAM" id="MobiDB-lite"/>
    </source>
</evidence>
<evidence type="ECO:0000305" key="6"/>